<comment type="function">
    <text evidence="1">Catalyzes the methylthiolation of an aspartic acid residue of ribosomal protein uS12.</text>
</comment>
<comment type="catalytic activity">
    <reaction evidence="1">
        <text>L-aspartate(89)-[ribosomal protein uS12]-hydrogen + (sulfur carrier)-SH + AH2 + 2 S-adenosyl-L-methionine = 3-methylsulfanyl-L-aspartate(89)-[ribosomal protein uS12]-hydrogen + (sulfur carrier)-H + 5'-deoxyadenosine + L-methionine + A + S-adenosyl-L-homocysteine + 2 H(+)</text>
        <dbReference type="Rhea" id="RHEA:37087"/>
        <dbReference type="Rhea" id="RHEA-COMP:10460"/>
        <dbReference type="Rhea" id="RHEA-COMP:10461"/>
        <dbReference type="Rhea" id="RHEA-COMP:14737"/>
        <dbReference type="Rhea" id="RHEA-COMP:14739"/>
        <dbReference type="ChEBI" id="CHEBI:13193"/>
        <dbReference type="ChEBI" id="CHEBI:15378"/>
        <dbReference type="ChEBI" id="CHEBI:17319"/>
        <dbReference type="ChEBI" id="CHEBI:17499"/>
        <dbReference type="ChEBI" id="CHEBI:29917"/>
        <dbReference type="ChEBI" id="CHEBI:29961"/>
        <dbReference type="ChEBI" id="CHEBI:57844"/>
        <dbReference type="ChEBI" id="CHEBI:57856"/>
        <dbReference type="ChEBI" id="CHEBI:59789"/>
        <dbReference type="ChEBI" id="CHEBI:64428"/>
        <dbReference type="ChEBI" id="CHEBI:73599"/>
        <dbReference type="EC" id="2.8.4.4"/>
    </reaction>
</comment>
<comment type="cofactor">
    <cofactor evidence="1">
        <name>[4Fe-4S] cluster</name>
        <dbReference type="ChEBI" id="CHEBI:49883"/>
    </cofactor>
    <text evidence="1">Binds 2 [4Fe-4S] clusters. One cluster is coordinated with 3 cysteines and an exchangeable S-adenosyl-L-methionine.</text>
</comment>
<comment type="subcellular location">
    <subcellularLocation>
        <location evidence="1">Cytoplasm</location>
    </subcellularLocation>
</comment>
<comment type="similarity">
    <text evidence="1">Belongs to the methylthiotransferase family. RimO subfamily.</text>
</comment>
<sequence>MKTPKVGFVSLGCPKALVDSERILTQLKTEGYQVASDYDGADLVVVNTCGFIESAVQESLDAIGEAMSENGRVIVTGCLGKDEDKIRQMHPNVLKVTGAAAYQDVMEAVHEYVPAPPKHNPFIDLVPEQGIRLTPKHYAYLKISEGCNHRCTFCIIPSMRGDLVSRPVGSVLEEAAALKRAGVKEILVISQDTSAYGVDTKYKLDFWNGQPVKTKFFDMCEALGQLGIWVRLHYVYPYPHVDAVIDLMAQGKILPYLDIPFQHASPRVLKLMKRPAHSENTLEKIKLWREKCPDLVIRSTFVVGFPGETEEDFQILLDWLVEAQLDRVGCFTYSPVEGATANDLPDHVPEEIKQERYERFMQVQQQISAAKLQKRIGQTMTVLVDSLEDEYPVAVARSYADAPEIDGNVFVEDIDKSTIQPGDMLEVEITDADEYDLFAKLIKIKSV</sequence>
<gene>
    <name evidence="1" type="primary">rimO</name>
    <name type="ordered locus">ABSDF1679</name>
</gene>
<keyword id="KW-0004">4Fe-4S</keyword>
<keyword id="KW-0963">Cytoplasm</keyword>
<keyword id="KW-0408">Iron</keyword>
<keyword id="KW-0411">Iron-sulfur</keyword>
<keyword id="KW-0479">Metal-binding</keyword>
<keyword id="KW-0949">S-adenosyl-L-methionine</keyword>
<keyword id="KW-0808">Transferase</keyword>
<evidence type="ECO:0000255" key="1">
    <source>
        <dbReference type="HAMAP-Rule" id="MF_01865"/>
    </source>
</evidence>
<evidence type="ECO:0000255" key="2">
    <source>
        <dbReference type="PROSITE-ProRule" id="PRU01266"/>
    </source>
</evidence>
<feature type="chain" id="PRO_0000374683" description="Ribosomal protein uS12 methylthiotransferase RimO">
    <location>
        <begin position="1"/>
        <end position="447"/>
    </location>
</feature>
<feature type="domain" description="MTTase N-terminal" evidence="1">
    <location>
        <begin position="4"/>
        <end position="114"/>
    </location>
</feature>
<feature type="domain" description="Radical SAM core" evidence="2">
    <location>
        <begin position="133"/>
        <end position="370"/>
    </location>
</feature>
<feature type="domain" description="TRAM" evidence="1">
    <location>
        <begin position="373"/>
        <end position="443"/>
    </location>
</feature>
<feature type="binding site" evidence="1">
    <location>
        <position position="13"/>
    </location>
    <ligand>
        <name>[4Fe-4S] cluster</name>
        <dbReference type="ChEBI" id="CHEBI:49883"/>
        <label>1</label>
    </ligand>
</feature>
<feature type="binding site" evidence="1">
    <location>
        <position position="49"/>
    </location>
    <ligand>
        <name>[4Fe-4S] cluster</name>
        <dbReference type="ChEBI" id="CHEBI:49883"/>
        <label>1</label>
    </ligand>
</feature>
<feature type="binding site" evidence="1">
    <location>
        <position position="78"/>
    </location>
    <ligand>
        <name>[4Fe-4S] cluster</name>
        <dbReference type="ChEBI" id="CHEBI:49883"/>
        <label>1</label>
    </ligand>
</feature>
<feature type="binding site" evidence="1">
    <location>
        <position position="147"/>
    </location>
    <ligand>
        <name>[4Fe-4S] cluster</name>
        <dbReference type="ChEBI" id="CHEBI:49883"/>
        <label>2</label>
        <note>4Fe-4S-S-AdoMet</note>
    </ligand>
</feature>
<feature type="binding site" evidence="1">
    <location>
        <position position="151"/>
    </location>
    <ligand>
        <name>[4Fe-4S] cluster</name>
        <dbReference type="ChEBI" id="CHEBI:49883"/>
        <label>2</label>
        <note>4Fe-4S-S-AdoMet</note>
    </ligand>
</feature>
<feature type="binding site" evidence="1">
    <location>
        <position position="154"/>
    </location>
    <ligand>
        <name>[4Fe-4S] cluster</name>
        <dbReference type="ChEBI" id="CHEBI:49883"/>
        <label>2</label>
        <note>4Fe-4S-S-AdoMet</note>
    </ligand>
</feature>
<name>RIMO_ACIBS</name>
<dbReference type="EC" id="2.8.4.4" evidence="1"/>
<dbReference type="EMBL" id="CU468230">
    <property type="protein sequence ID" value="CAP01019.1"/>
    <property type="molecule type" value="Genomic_DNA"/>
</dbReference>
<dbReference type="SMR" id="B0VMU3"/>
<dbReference type="KEGG" id="abm:ABSDF1679"/>
<dbReference type="HOGENOM" id="CLU_018697_0_0_6"/>
<dbReference type="Proteomes" id="UP000001741">
    <property type="component" value="Chromosome"/>
</dbReference>
<dbReference type="GO" id="GO:0005829">
    <property type="term" value="C:cytosol"/>
    <property type="evidence" value="ECO:0007669"/>
    <property type="project" value="TreeGrafter"/>
</dbReference>
<dbReference type="GO" id="GO:0051539">
    <property type="term" value="F:4 iron, 4 sulfur cluster binding"/>
    <property type="evidence" value="ECO:0007669"/>
    <property type="project" value="UniProtKB-UniRule"/>
</dbReference>
<dbReference type="GO" id="GO:0035599">
    <property type="term" value="F:aspartic acid methylthiotransferase activity"/>
    <property type="evidence" value="ECO:0007669"/>
    <property type="project" value="TreeGrafter"/>
</dbReference>
<dbReference type="GO" id="GO:0046872">
    <property type="term" value="F:metal ion binding"/>
    <property type="evidence" value="ECO:0007669"/>
    <property type="project" value="UniProtKB-KW"/>
</dbReference>
<dbReference type="GO" id="GO:0103039">
    <property type="term" value="F:protein methylthiotransferase activity"/>
    <property type="evidence" value="ECO:0007669"/>
    <property type="project" value="UniProtKB-EC"/>
</dbReference>
<dbReference type="GO" id="GO:0006400">
    <property type="term" value="P:tRNA modification"/>
    <property type="evidence" value="ECO:0007669"/>
    <property type="project" value="InterPro"/>
</dbReference>
<dbReference type="CDD" id="cd01335">
    <property type="entry name" value="Radical_SAM"/>
    <property type="match status" value="1"/>
</dbReference>
<dbReference type="FunFam" id="3.40.50.12160:FF:000002">
    <property type="entry name" value="Ribosomal protein S12 methylthiotransferase RimO"/>
    <property type="match status" value="1"/>
</dbReference>
<dbReference type="FunFam" id="3.80.30.20:FF:000001">
    <property type="entry name" value="tRNA-2-methylthio-N(6)-dimethylallyladenosine synthase 2"/>
    <property type="match status" value="1"/>
</dbReference>
<dbReference type="Gene3D" id="3.40.50.12160">
    <property type="entry name" value="Methylthiotransferase, N-terminal domain"/>
    <property type="match status" value="1"/>
</dbReference>
<dbReference type="Gene3D" id="2.40.50.140">
    <property type="entry name" value="Nucleic acid-binding proteins"/>
    <property type="match status" value="1"/>
</dbReference>
<dbReference type="Gene3D" id="3.80.30.20">
    <property type="entry name" value="tm_1862 like domain"/>
    <property type="match status" value="1"/>
</dbReference>
<dbReference type="HAMAP" id="MF_01865">
    <property type="entry name" value="MTTase_RimO"/>
    <property type="match status" value="1"/>
</dbReference>
<dbReference type="InterPro" id="IPR006638">
    <property type="entry name" value="Elp3/MiaA/NifB-like_rSAM"/>
</dbReference>
<dbReference type="InterPro" id="IPR005839">
    <property type="entry name" value="Methylthiotransferase"/>
</dbReference>
<dbReference type="InterPro" id="IPR020612">
    <property type="entry name" value="Methylthiotransferase_CS"/>
</dbReference>
<dbReference type="InterPro" id="IPR013848">
    <property type="entry name" value="Methylthiotransferase_N"/>
</dbReference>
<dbReference type="InterPro" id="IPR038135">
    <property type="entry name" value="Methylthiotransferase_N_sf"/>
</dbReference>
<dbReference type="InterPro" id="IPR012340">
    <property type="entry name" value="NA-bd_OB-fold"/>
</dbReference>
<dbReference type="InterPro" id="IPR005840">
    <property type="entry name" value="Ribosomal_uS12_MeSTrfase_RimO"/>
</dbReference>
<dbReference type="InterPro" id="IPR007197">
    <property type="entry name" value="rSAM"/>
</dbReference>
<dbReference type="InterPro" id="IPR023404">
    <property type="entry name" value="rSAM_horseshoe"/>
</dbReference>
<dbReference type="InterPro" id="IPR002792">
    <property type="entry name" value="TRAM_dom"/>
</dbReference>
<dbReference type="NCBIfam" id="TIGR01125">
    <property type="entry name" value="30S ribosomal protein S12 methylthiotransferase RimO"/>
    <property type="match status" value="1"/>
</dbReference>
<dbReference type="NCBIfam" id="TIGR00089">
    <property type="entry name" value="MiaB/RimO family radical SAM methylthiotransferase"/>
    <property type="match status" value="1"/>
</dbReference>
<dbReference type="PANTHER" id="PTHR43837">
    <property type="entry name" value="RIBOSOMAL PROTEIN S12 METHYLTHIOTRANSFERASE RIMO"/>
    <property type="match status" value="1"/>
</dbReference>
<dbReference type="PANTHER" id="PTHR43837:SF1">
    <property type="entry name" value="RIBOSOMAL PROTEIN US12 METHYLTHIOTRANSFERASE RIMO"/>
    <property type="match status" value="1"/>
</dbReference>
<dbReference type="Pfam" id="PF04055">
    <property type="entry name" value="Radical_SAM"/>
    <property type="match status" value="1"/>
</dbReference>
<dbReference type="Pfam" id="PF18693">
    <property type="entry name" value="TRAM_2"/>
    <property type="match status" value="1"/>
</dbReference>
<dbReference type="Pfam" id="PF00919">
    <property type="entry name" value="UPF0004"/>
    <property type="match status" value="1"/>
</dbReference>
<dbReference type="SFLD" id="SFLDG01082">
    <property type="entry name" value="B12-binding_domain_containing"/>
    <property type="match status" value="1"/>
</dbReference>
<dbReference type="SFLD" id="SFLDS00029">
    <property type="entry name" value="Radical_SAM"/>
    <property type="match status" value="1"/>
</dbReference>
<dbReference type="SFLD" id="SFLDF00274">
    <property type="entry name" value="ribosomal_protein_S12_methylth"/>
    <property type="match status" value="1"/>
</dbReference>
<dbReference type="SMART" id="SM00729">
    <property type="entry name" value="Elp3"/>
    <property type="match status" value="1"/>
</dbReference>
<dbReference type="SUPFAM" id="SSF102114">
    <property type="entry name" value="Radical SAM enzymes"/>
    <property type="match status" value="1"/>
</dbReference>
<dbReference type="PROSITE" id="PS51449">
    <property type="entry name" value="MTTASE_N"/>
    <property type="match status" value="1"/>
</dbReference>
<dbReference type="PROSITE" id="PS01278">
    <property type="entry name" value="MTTASE_RADICAL"/>
    <property type="match status" value="1"/>
</dbReference>
<dbReference type="PROSITE" id="PS51918">
    <property type="entry name" value="RADICAL_SAM"/>
    <property type="match status" value="1"/>
</dbReference>
<dbReference type="PROSITE" id="PS50926">
    <property type="entry name" value="TRAM"/>
    <property type="match status" value="1"/>
</dbReference>
<reference key="1">
    <citation type="journal article" date="2008" name="PLoS ONE">
        <title>Comparative analysis of Acinetobacters: three genomes for three lifestyles.</title>
        <authorList>
            <person name="Vallenet D."/>
            <person name="Nordmann P."/>
            <person name="Barbe V."/>
            <person name="Poirel L."/>
            <person name="Mangenot S."/>
            <person name="Bataille E."/>
            <person name="Dossat C."/>
            <person name="Gas S."/>
            <person name="Kreimeyer A."/>
            <person name="Lenoble P."/>
            <person name="Oztas S."/>
            <person name="Poulain J."/>
            <person name="Segurens B."/>
            <person name="Robert C."/>
            <person name="Abergel C."/>
            <person name="Claverie J.-M."/>
            <person name="Raoult D."/>
            <person name="Medigue C."/>
            <person name="Weissenbach J."/>
            <person name="Cruveiller S."/>
        </authorList>
    </citation>
    <scope>NUCLEOTIDE SEQUENCE [LARGE SCALE GENOMIC DNA]</scope>
    <source>
        <strain>SDF</strain>
    </source>
</reference>
<proteinExistence type="inferred from homology"/>
<organism>
    <name type="scientific">Acinetobacter baumannii (strain SDF)</name>
    <dbReference type="NCBI Taxonomy" id="509170"/>
    <lineage>
        <taxon>Bacteria</taxon>
        <taxon>Pseudomonadati</taxon>
        <taxon>Pseudomonadota</taxon>
        <taxon>Gammaproteobacteria</taxon>
        <taxon>Moraxellales</taxon>
        <taxon>Moraxellaceae</taxon>
        <taxon>Acinetobacter</taxon>
        <taxon>Acinetobacter calcoaceticus/baumannii complex</taxon>
    </lineage>
</organism>
<accession>B0VMU3</accession>
<protein>
    <recommendedName>
        <fullName evidence="1">Ribosomal protein uS12 methylthiotransferase RimO</fullName>
        <shortName evidence="1">uS12 MTTase</shortName>
        <shortName evidence="1">uS12 methylthiotransferase</shortName>
        <ecNumber evidence="1">2.8.4.4</ecNumber>
    </recommendedName>
    <alternativeName>
        <fullName evidence="1">Ribosomal protein uS12 (aspartate-C(3))-methylthiotransferase</fullName>
    </alternativeName>
    <alternativeName>
        <fullName evidence="1">Ribosome maturation factor RimO</fullName>
    </alternativeName>
</protein>